<accession>C0QDP8</accession>
<name>FLUC_DESAH</name>
<evidence type="ECO:0000255" key="1">
    <source>
        <dbReference type="HAMAP-Rule" id="MF_00454"/>
    </source>
</evidence>
<sequence length="125" mass="13637">MEHKFVFIALAGALGTLARYSLAGFVQQFNSSFFPFGTLVVNITGCFAAGFLWTLFESRWAVSGEVRTFVLVGFMGAFTTFSAFILETGMLVRSTEWIYGIVNLLLQNSLGFGALMAGIVLGRLI</sequence>
<comment type="function">
    <text evidence="1">Fluoride-specific ion channel. Important for reducing fluoride concentration in the cell, thus reducing its toxicity.</text>
</comment>
<comment type="catalytic activity">
    <reaction evidence="1">
        <text>fluoride(in) = fluoride(out)</text>
        <dbReference type="Rhea" id="RHEA:76159"/>
        <dbReference type="ChEBI" id="CHEBI:17051"/>
    </reaction>
    <physiologicalReaction direction="left-to-right" evidence="1">
        <dbReference type="Rhea" id="RHEA:76160"/>
    </physiologicalReaction>
</comment>
<comment type="activity regulation">
    <text evidence="1">Na(+) is not transported, but it plays an essential structural role and its presence is essential for fluoride channel function.</text>
</comment>
<comment type="subcellular location">
    <subcellularLocation>
        <location evidence="1">Cell inner membrane</location>
        <topology evidence="1">Multi-pass membrane protein</topology>
    </subcellularLocation>
</comment>
<comment type="similarity">
    <text evidence="1">Belongs to the fluoride channel Fluc/FEX (TC 1.A.43) family.</text>
</comment>
<protein>
    <recommendedName>
        <fullName evidence="1">Fluoride-specific ion channel FluC</fullName>
    </recommendedName>
</protein>
<proteinExistence type="inferred from homology"/>
<reference key="1">
    <citation type="journal article" date="2009" name="Environ. Microbiol.">
        <title>Genome sequence of Desulfobacterium autotrophicum HRM2, a marine sulfate reducer oxidizing organic carbon completely to carbon dioxide.</title>
        <authorList>
            <person name="Strittmatter A.W."/>
            <person name="Liesegang H."/>
            <person name="Rabus R."/>
            <person name="Decker I."/>
            <person name="Amann J."/>
            <person name="Andres S."/>
            <person name="Henne A."/>
            <person name="Fricke W.F."/>
            <person name="Martinez-Arias R."/>
            <person name="Bartels D."/>
            <person name="Goesmann A."/>
            <person name="Krause L."/>
            <person name="Puehler A."/>
            <person name="Klenk H.P."/>
            <person name="Richter M."/>
            <person name="Schuler M."/>
            <person name="Gloeckner F.O."/>
            <person name="Meyerdierks A."/>
            <person name="Gottschalk G."/>
            <person name="Amann R."/>
        </authorList>
    </citation>
    <scope>NUCLEOTIDE SEQUENCE [LARGE SCALE GENOMIC DNA]</scope>
    <source>
        <strain>ATCC 43914 / DSM 3382 / VKM B-1955 / HRM2</strain>
    </source>
</reference>
<feature type="chain" id="PRO_1000206246" description="Fluoride-specific ion channel FluC">
    <location>
        <begin position="1"/>
        <end position="125"/>
    </location>
</feature>
<feature type="transmembrane region" description="Helical" evidence="1">
    <location>
        <begin position="5"/>
        <end position="25"/>
    </location>
</feature>
<feature type="transmembrane region" description="Helical" evidence="1">
    <location>
        <begin position="33"/>
        <end position="53"/>
    </location>
</feature>
<feature type="transmembrane region" description="Helical" evidence="1">
    <location>
        <begin position="69"/>
        <end position="89"/>
    </location>
</feature>
<feature type="transmembrane region" description="Helical" evidence="1">
    <location>
        <begin position="101"/>
        <end position="121"/>
    </location>
</feature>
<feature type="binding site" evidence="1">
    <location>
        <position position="76"/>
    </location>
    <ligand>
        <name>Na(+)</name>
        <dbReference type="ChEBI" id="CHEBI:29101"/>
        <note>structural</note>
    </ligand>
</feature>
<feature type="binding site" evidence="1">
    <location>
        <position position="79"/>
    </location>
    <ligand>
        <name>Na(+)</name>
        <dbReference type="ChEBI" id="CHEBI:29101"/>
        <note>structural</note>
    </ligand>
</feature>
<keyword id="KW-0997">Cell inner membrane</keyword>
<keyword id="KW-1003">Cell membrane</keyword>
<keyword id="KW-0407">Ion channel</keyword>
<keyword id="KW-0406">Ion transport</keyword>
<keyword id="KW-0472">Membrane</keyword>
<keyword id="KW-0479">Metal-binding</keyword>
<keyword id="KW-1185">Reference proteome</keyword>
<keyword id="KW-0915">Sodium</keyword>
<keyword id="KW-0812">Transmembrane</keyword>
<keyword id="KW-1133">Transmembrane helix</keyword>
<keyword id="KW-0813">Transport</keyword>
<gene>
    <name evidence="1" type="primary">fluC</name>
    <name evidence="1" type="synonym">crcB</name>
    <name type="ordered locus">HRM2_42630</name>
</gene>
<dbReference type="EMBL" id="CP001087">
    <property type="protein sequence ID" value="ACN17319.1"/>
    <property type="molecule type" value="Genomic_DNA"/>
</dbReference>
<dbReference type="RefSeq" id="WP_015906051.1">
    <property type="nucleotide sequence ID" value="NC_012108.1"/>
</dbReference>
<dbReference type="SMR" id="C0QDP8"/>
<dbReference type="STRING" id="177437.HRM2_42630"/>
<dbReference type="KEGG" id="dat:HRM2_42630"/>
<dbReference type="eggNOG" id="COG0239">
    <property type="taxonomic scope" value="Bacteria"/>
</dbReference>
<dbReference type="HOGENOM" id="CLU_114342_2_3_7"/>
<dbReference type="OrthoDB" id="9806299at2"/>
<dbReference type="Proteomes" id="UP000000442">
    <property type="component" value="Chromosome"/>
</dbReference>
<dbReference type="GO" id="GO:0005886">
    <property type="term" value="C:plasma membrane"/>
    <property type="evidence" value="ECO:0007669"/>
    <property type="project" value="UniProtKB-SubCell"/>
</dbReference>
<dbReference type="GO" id="GO:0062054">
    <property type="term" value="F:fluoride channel activity"/>
    <property type="evidence" value="ECO:0007669"/>
    <property type="project" value="UniProtKB-UniRule"/>
</dbReference>
<dbReference type="GO" id="GO:0046872">
    <property type="term" value="F:metal ion binding"/>
    <property type="evidence" value="ECO:0007669"/>
    <property type="project" value="UniProtKB-KW"/>
</dbReference>
<dbReference type="GO" id="GO:0140114">
    <property type="term" value="P:cellular detoxification of fluoride"/>
    <property type="evidence" value="ECO:0007669"/>
    <property type="project" value="UniProtKB-UniRule"/>
</dbReference>
<dbReference type="HAMAP" id="MF_00454">
    <property type="entry name" value="FluC"/>
    <property type="match status" value="1"/>
</dbReference>
<dbReference type="InterPro" id="IPR003691">
    <property type="entry name" value="FluC"/>
</dbReference>
<dbReference type="PANTHER" id="PTHR28259">
    <property type="entry name" value="FLUORIDE EXPORT PROTEIN 1-RELATED"/>
    <property type="match status" value="1"/>
</dbReference>
<dbReference type="PANTHER" id="PTHR28259:SF1">
    <property type="entry name" value="FLUORIDE EXPORT PROTEIN 1-RELATED"/>
    <property type="match status" value="1"/>
</dbReference>
<dbReference type="Pfam" id="PF02537">
    <property type="entry name" value="CRCB"/>
    <property type="match status" value="1"/>
</dbReference>
<organism>
    <name type="scientific">Desulforapulum autotrophicum (strain ATCC 43914 / DSM 3382 / VKM B-1955 / HRM2)</name>
    <name type="common">Desulfobacterium autotrophicum</name>
    <dbReference type="NCBI Taxonomy" id="177437"/>
    <lineage>
        <taxon>Bacteria</taxon>
        <taxon>Pseudomonadati</taxon>
        <taxon>Thermodesulfobacteriota</taxon>
        <taxon>Desulfobacteria</taxon>
        <taxon>Desulfobacterales</taxon>
        <taxon>Desulfobacteraceae</taxon>
        <taxon>Desulforapulum</taxon>
    </lineage>
</organism>